<sequence length="97" mass="11229">MSLLTEVETPTRNGWECKCSDSSDPLVIAASIIGILHLILWILDRLFFKFIYRRLKYGLKRGPSTEGVPESMREEYRQEQQNAVDVDDGHFVNIELE</sequence>
<organism>
    <name type="scientific">Influenza A virus (strain A/Equine/Alaska/1/1991 H3N8)</name>
    <dbReference type="NCBI Taxonomy" id="387213"/>
    <lineage>
        <taxon>Viruses</taxon>
        <taxon>Riboviria</taxon>
        <taxon>Orthornavirae</taxon>
        <taxon>Negarnaviricota</taxon>
        <taxon>Polyploviricotina</taxon>
        <taxon>Insthoviricetes</taxon>
        <taxon>Articulavirales</taxon>
        <taxon>Orthomyxoviridae</taxon>
        <taxon>Alphainfluenzavirus</taxon>
        <taxon>Alphainfluenzavirus influenzae</taxon>
        <taxon>Influenza A virus</taxon>
    </lineage>
</organism>
<dbReference type="EMBL" id="AF001679">
    <property type="protein sequence ID" value="AAC31283.1"/>
    <property type="molecule type" value="Genomic_RNA"/>
</dbReference>
<dbReference type="SMR" id="Q77ZK8"/>
<dbReference type="GO" id="GO:0020002">
    <property type="term" value="C:host cell plasma membrane"/>
    <property type="evidence" value="ECO:0007669"/>
    <property type="project" value="UniProtKB-SubCell"/>
</dbReference>
<dbReference type="GO" id="GO:0016020">
    <property type="term" value="C:membrane"/>
    <property type="evidence" value="ECO:0007669"/>
    <property type="project" value="UniProtKB-UniRule"/>
</dbReference>
<dbReference type="GO" id="GO:0055036">
    <property type="term" value="C:virion membrane"/>
    <property type="evidence" value="ECO:0007669"/>
    <property type="project" value="UniProtKB-SubCell"/>
</dbReference>
<dbReference type="GO" id="GO:0005216">
    <property type="term" value="F:monoatomic ion channel activity"/>
    <property type="evidence" value="ECO:0007669"/>
    <property type="project" value="UniProtKB-UniRule"/>
</dbReference>
<dbReference type="GO" id="GO:0015078">
    <property type="term" value="F:proton transmembrane transporter activity"/>
    <property type="evidence" value="ECO:0007669"/>
    <property type="project" value="UniProtKB-UniRule"/>
</dbReference>
<dbReference type="GO" id="GO:0051259">
    <property type="term" value="P:protein complex oligomerization"/>
    <property type="evidence" value="ECO:0007669"/>
    <property type="project" value="UniProtKB-UniRule"/>
</dbReference>
<dbReference type="GO" id="GO:0044694">
    <property type="term" value="P:symbiont genome entry into host cell via pore formation in plasma membrane"/>
    <property type="evidence" value="ECO:0007669"/>
    <property type="project" value="UniProtKB-UniRule"/>
</dbReference>
<dbReference type="GO" id="GO:0140321">
    <property type="term" value="P:symbiont-mediated suppression of host autophagy"/>
    <property type="evidence" value="ECO:0007669"/>
    <property type="project" value="UniProtKB-KW"/>
</dbReference>
<dbReference type="Gene3D" id="6.10.250.1640">
    <property type="match status" value="1"/>
</dbReference>
<dbReference type="HAMAP" id="MF_04069">
    <property type="entry name" value="INFV_M2"/>
    <property type="match status" value="1"/>
</dbReference>
<dbReference type="InterPro" id="IPR002089">
    <property type="entry name" value="Flu_M2"/>
</dbReference>
<dbReference type="Pfam" id="PF00599">
    <property type="entry name" value="Flu_M2"/>
    <property type="match status" value="1"/>
</dbReference>
<reference key="1">
    <citation type="journal article" date="1998" name="Arch. Virol.">
        <title>Phylogenetic analyses of the matrix and non-structural genes of equine influenza viruses.</title>
        <authorList>
            <person name="Lindstrom S."/>
            <person name="Endo A."/>
            <person name="Sugita S."/>
            <person name="Pecoraro M."/>
            <person name="Hiromoto Y."/>
            <person name="Kamada M."/>
            <person name="Takahashi T."/>
            <person name="Nerome K."/>
        </authorList>
    </citation>
    <scope>NUCLEOTIDE SEQUENCE [GENOMIC RNA]</scope>
</reference>
<evidence type="ECO:0000255" key="1">
    <source>
        <dbReference type="HAMAP-Rule" id="MF_04069"/>
    </source>
</evidence>
<evidence type="ECO:0000256" key="2">
    <source>
        <dbReference type="SAM" id="MobiDB-lite"/>
    </source>
</evidence>
<feature type="chain" id="PRO_0000326391" description="Matrix protein 2">
    <location>
        <begin position="1"/>
        <end position="97"/>
    </location>
</feature>
<feature type="topological domain" description="Virion surface" evidence="1">
    <location>
        <begin position="1"/>
        <end position="22"/>
    </location>
</feature>
<feature type="transmembrane region" description="Helical; Signal-anchor for type III membrane protein" evidence="1">
    <location>
        <begin position="23"/>
        <end position="43"/>
    </location>
</feature>
<feature type="topological domain" description="Intravirion" evidence="1">
    <location>
        <begin position="44"/>
        <end position="97"/>
    </location>
</feature>
<feature type="region of interest" description="Disordered" evidence="2">
    <location>
        <begin position="61"/>
        <end position="80"/>
    </location>
</feature>
<feature type="site" description="Essential for channel activity, possibly by being protonated during channel activation, and by forming the channel gate and the selective filter" evidence="1">
    <location>
        <position position="37"/>
    </location>
</feature>
<feature type="site" description="Seems to be involved in pH gating" evidence="1">
    <location>
        <position position="41"/>
    </location>
</feature>
<feature type="modified residue" description="Phosphoserine; by host" evidence="1">
    <location>
        <position position="64"/>
    </location>
</feature>
<feature type="disulfide bond" description="Interchain (with C-17)" evidence="1">
    <location>
        <position position="17"/>
    </location>
</feature>
<feature type="disulfide bond" description="Interchain (with C-19)" evidence="1">
    <location>
        <position position="19"/>
    </location>
</feature>
<accession>Q77ZK8</accession>
<organismHost>
    <name type="scientific">Aves</name>
    <dbReference type="NCBI Taxonomy" id="8782"/>
</organismHost>
<organismHost>
    <name type="scientific">Equus caballus</name>
    <name type="common">Horse</name>
    <dbReference type="NCBI Taxonomy" id="9796"/>
</organismHost>
<protein>
    <recommendedName>
        <fullName evidence="1">Matrix protein 2</fullName>
    </recommendedName>
    <alternativeName>
        <fullName evidence="1">Proton channel protein M2</fullName>
    </alternativeName>
</protein>
<gene>
    <name evidence="1" type="primary">M</name>
</gene>
<comment type="function">
    <text evidence="1">Forms a proton-selective ion channel that is necessary for the efficient release of the viral genome during virus entry. After attaching to the cell surface, the virion enters the cell by endocytosis. Acidification of the endosome triggers M2 ion channel activity. The influx of protons into virion interior is believed to disrupt interactions between the viral ribonucleoprotein (RNP), matrix protein 1 (M1), and lipid bilayers, thereby freeing the viral genome from interaction with viral proteins and enabling RNA segments to migrate to the host cell nucleus, where influenza virus RNA transcription and replication occur. Also plays a role in viral proteins secretory pathway. Elevates the intravesicular pH of normally acidic compartments, such as trans-Golgi network, preventing newly formed hemagglutinin from premature switching to the fusion-active conformation.</text>
</comment>
<comment type="activity regulation">
    <text>The M2 protein from most influenza A strains is inhibited by amantadine and rimantadine, resulting in viral uncoating incapacity. Emergence of amantadine-resistant variants is usually rapid.</text>
</comment>
<comment type="subunit">
    <text evidence="1">Homotetramer; composed of two disulfide-linked dimers held together by non-covalent interactions. May interact with matrix protein 1.</text>
</comment>
<comment type="subcellular location">
    <subcellularLocation>
        <location evidence="1">Virion membrane</location>
    </subcellularLocation>
    <subcellularLocation>
        <location evidence="1">Host apical cell membrane</location>
        <topology evidence="1">Single-pass type III membrane protein</topology>
    </subcellularLocation>
    <text evidence="1">Abundantly expressed at the apical plasma membrane in infected polarized epithelial cells, in close proximity to budding and assembled virions. Minor component of virions (only 16-20 molecules/virion).</text>
</comment>
<comment type="alternative products">
    <event type="alternative splicing"/>
    <isoform>
        <id>Q77ZK8-1</id>
        <name>M2</name>
        <sequence type="displayed"/>
    </isoform>
    <isoform>
        <id>Q77ZK7-1</id>
        <name>M1</name>
        <sequence type="external"/>
    </isoform>
    <text>Only the first 9 residues are shared by the 2 isoforms.</text>
</comment>
<comment type="domain">
    <text evidence="1">Cytoplasmic tail plays an important role in virion assembly and morphogenesis.</text>
</comment>
<comment type="miscellaneous">
    <text evidence="1">When the channel is activated, one or more imidazole moieties of His-37 probably become bi-protonated.</text>
</comment>
<comment type="similarity">
    <text evidence="1">Belongs to the influenza viruses matrix protein M2 family.</text>
</comment>
<keyword id="KW-0025">Alternative splicing</keyword>
<keyword id="KW-1015">Disulfide bond</keyword>
<keyword id="KW-1032">Host cell membrane</keyword>
<keyword id="KW-1043">Host membrane</keyword>
<keyword id="KW-0945">Host-virus interaction</keyword>
<keyword id="KW-0375">Hydrogen ion transport</keyword>
<keyword id="KW-1083">Inhibition of host autophagy by virus</keyword>
<keyword id="KW-0407">Ion channel</keyword>
<keyword id="KW-0406">Ion transport</keyword>
<keyword id="KW-0449">Lipoprotein</keyword>
<keyword id="KW-0472">Membrane</keyword>
<keyword id="KW-0564">Palmitate</keyword>
<keyword id="KW-0597">Phosphoprotein</keyword>
<keyword id="KW-0735">Signal-anchor</keyword>
<keyword id="KW-0812">Transmembrane</keyword>
<keyword id="KW-1133">Transmembrane helix</keyword>
<keyword id="KW-0813">Transport</keyword>
<keyword id="KW-1182">Viral ion channel</keyword>
<keyword id="KW-0946">Virion</keyword>
<proteinExistence type="inferred from homology"/>
<name>M2_I91A0</name>